<accession>A4WP56</accession>
<evidence type="ECO:0000255" key="1">
    <source>
        <dbReference type="HAMAP-Rule" id="MF_01147"/>
    </source>
</evidence>
<dbReference type="EC" id="2.5.1.145" evidence="1"/>
<dbReference type="EMBL" id="CP000661">
    <property type="protein sequence ID" value="ABP69170.1"/>
    <property type="molecule type" value="Genomic_DNA"/>
</dbReference>
<dbReference type="SMR" id="A4WP56"/>
<dbReference type="STRING" id="349102.Rsph17025_0260"/>
<dbReference type="KEGG" id="rsq:Rsph17025_0260"/>
<dbReference type="eggNOG" id="COG0682">
    <property type="taxonomic scope" value="Bacteria"/>
</dbReference>
<dbReference type="HOGENOM" id="CLU_013386_1_0_5"/>
<dbReference type="BioCyc" id="RSPH349102:G1G8M-266-MONOMER"/>
<dbReference type="UniPathway" id="UPA00664"/>
<dbReference type="GO" id="GO:0005886">
    <property type="term" value="C:plasma membrane"/>
    <property type="evidence" value="ECO:0007669"/>
    <property type="project" value="UniProtKB-SubCell"/>
</dbReference>
<dbReference type="GO" id="GO:0008961">
    <property type="term" value="F:phosphatidylglycerol-prolipoprotein diacylglyceryl transferase activity"/>
    <property type="evidence" value="ECO:0007669"/>
    <property type="project" value="UniProtKB-UniRule"/>
</dbReference>
<dbReference type="GO" id="GO:0042158">
    <property type="term" value="P:lipoprotein biosynthetic process"/>
    <property type="evidence" value="ECO:0007669"/>
    <property type="project" value="UniProtKB-UniRule"/>
</dbReference>
<dbReference type="HAMAP" id="MF_01147">
    <property type="entry name" value="Lgt"/>
    <property type="match status" value="1"/>
</dbReference>
<dbReference type="InterPro" id="IPR001640">
    <property type="entry name" value="Lgt"/>
</dbReference>
<dbReference type="NCBIfam" id="TIGR00544">
    <property type="entry name" value="lgt"/>
    <property type="match status" value="1"/>
</dbReference>
<dbReference type="PANTHER" id="PTHR30589:SF0">
    <property type="entry name" value="PHOSPHATIDYLGLYCEROL--PROLIPOPROTEIN DIACYLGLYCERYL TRANSFERASE"/>
    <property type="match status" value="1"/>
</dbReference>
<dbReference type="PANTHER" id="PTHR30589">
    <property type="entry name" value="PROLIPOPROTEIN DIACYLGLYCERYL TRANSFERASE"/>
    <property type="match status" value="1"/>
</dbReference>
<dbReference type="Pfam" id="PF01790">
    <property type="entry name" value="LGT"/>
    <property type="match status" value="1"/>
</dbReference>
<dbReference type="PROSITE" id="PS01311">
    <property type="entry name" value="LGT"/>
    <property type="match status" value="1"/>
</dbReference>
<reference key="1">
    <citation type="submission" date="2007-04" db="EMBL/GenBank/DDBJ databases">
        <title>Complete sequence of chromosome of Rhodobacter sphaeroides ATCC 17025.</title>
        <authorList>
            <consortium name="US DOE Joint Genome Institute"/>
            <person name="Copeland A."/>
            <person name="Lucas S."/>
            <person name="Lapidus A."/>
            <person name="Barry K."/>
            <person name="Detter J.C."/>
            <person name="Glavina del Rio T."/>
            <person name="Hammon N."/>
            <person name="Israni S."/>
            <person name="Dalin E."/>
            <person name="Tice H."/>
            <person name="Pitluck S."/>
            <person name="Chertkov O."/>
            <person name="Brettin T."/>
            <person name="Bruce D."/>
            <person name="Han C."/>
            <person name="Schmutz J."/>
            <person name="Larimer F."/>
            <person name="Land M."/>
            <person name="Hauser L."/>
            <person name="Kyrpides N."/>
            <person name="Kim E."/>
            <person name="Richardson P."/>
            <person name="Mackenzie C."/>
            <person name="Choudhary M."/>
            <person name="Donohue T.J."/>
            <person name="Kaplan S."/>
        </authorList>
    </citation>
    <scope>NUCLEOTIDE SEQUENCE [LARGE SCALE GENOMIC DNA]</scope>
    <source>
        <strain>ATCC 17025 / ATH 2.4.3</strain>
    </source>
</reference>
<organism>
    <name type="scientific">Cereibacter sphaeroides (strain ATCC 17025 / ATH 2.4.3)</name>
    <name type="common">Rhodobacter sphaeroides</name>
    <dbReference type="NCBI Taxonomy" id="349102"/>
    <lineage>
        <taxon>Bacteria</taxon>
        <taxon>Pseudomonadati</taxon>
        <taxon>Pseudomonadota</taxon>
        <taxon>Alphaproteobacteria</taxon>
        <taxon>Rhodobacterales</taxon>
        <taxon>Paracoccaceae</taxon>
        <taxon>Cereibacter</taxon>
    </lineage>
</organism>
<keyword id="KW-0997">Cell inner membrane</keyword>
<keyword id="KW-1003">Cell membrane</keyword>
<keyword id="KW-0472">Membrane</keyword>
<keyword id="KW-0808">Transferase</keyword>
<keyword id="KW-0812">Transmembrane</keyword>
<keyword id="KW-1133">Transmembrane helix</keyword>
<name>LGT_CERS5</name>
<feature type="chain" id="PRO_1000053490" description="Phosphatidylglycerol--prolipoprotein diacylglyceryl transferase">
    <location>
        <begin position="1"/>
        <end position="292"/>
    </location>
</feature>
<feature type="transmembrane region" description="Helical" evidence="1">
    <location>
        <begin position="18"/>
        <end position="38"/>
    </location>
</feature>
<feature type="transmembrane region" description="Helical" evidence="1">
    <location>
        <begin position="67"/>
        <end position="87"/>
    </location>
</feature>
<feature type="transmembrane region" description="Helical" evidence="1">
    <location>
        <begin position="105"/>
        <end position="125"/>
    </location>
</feature>
<feature type="transmembrane region" description="Helical" evidence="1">
    <location>
        <begin position="129"/>
        <end position="149"/>
    </location>
</feature>
<feature type="transmembrane region" description="Helical" evidence="1">
    <location>
        <begin position="193"/>
        <end position="213"/>
    </location>
</feature>
<feature type="transmembrane region" description="Helical" evidence="1">
    <location>
        <begin position="222"/>
        <end position="242"/>
    </location>
</feature>
<feature type="transmembrane region" description="Helical" evidence="1">
    <location>
        <begin position="266"/>
        <end position="286"/>
    </location>
</feature>
<feature type="binding site" evidence="1">
    <location>
        <position position="150"/>
    </location>
    <ligand>
        <name>a 1,2-diacyl-sn-glycero-3-phospho-(1'-sn-glycerol)</name>
        <dbReference type="ChEBI" id="CHEBI:64716"/>
    </ligand>
</feature>
<sequence length="292" mass="32256">MSYIPFPDISPEIFSVELFGATFALRWYALAYIAGLLIGWRLVLRMIRSDRLWTFGAPMTEDQLERLLTWVILGVILGGRLGFVLFYQPSHYLAHPLDALKVWEGGMSFHGGFLGVMVAVIAFCLRERISILPVADLLAAATPPGLFLGRIANFINAELWGRPTTLPWGVAFPGEAAQTCPGIEGICARHPSQLYEAALEGIVLFAILAILIWRRGWLRWPGAVTGAFLAGYGCARFLVEFVRQPDAQFVTPGNPLGLAWEIGGYGLTMGQILSLPMILLGLYFMLRARRTA</sequence>
<gene>
    <name evidence="1" type="primary">lgt</name>
    <name type="ordered locus">Rsph17025_0260</name>
</gene>
<comment type="function">
    <text evidence="1">Catalyzes the transfer of the diacylglyceryl group from phosphatidylglycerol to the sulfhydryl group of the N-terminal cysteine of a prolipoprotein, the first step in the formation of mature lipoproteins.</text>
</comment>
<comment type="catalytic activity">
    <reaction evidence="1">
        <text>L-cysteinyl-[prolipoprotein] + a 1,2-diacyl-sn-glycero-3-phospho-(1'-sn-glycerol) = an S-1,2-diacyl-sn-glyceryl-L-cysteinyl-[prolipoprotein] + sn-glycerol 1-phosphate + H(+)</text>
        <dbReference type="Rhea" id="RHEA:56712"/>
        <dbReference type="Rhea" id="RHEA-COMP:14679"/>
        <dbReference type="Rhea" id="RHEA-COMP:14680"/>
        <dbReference type="ChEBI" id="CHEBI:15378"/>
        <dbReference type="ChEBI" id="CHEBI:29950"/>
        <dbReference type="ChEBI" id="CHEBI:57685"/>
        <dbReference type="ChEBI" id="CHEBI:64716"/>
        <dbReference type="ChEBI" id="CHEBI:140658"/>
        <dbReference type="EC" id="2.5.1.145"/>
    </reaction>
</comment>
<comment type="pathway">
    <text evidence="1">Protein modification; lipoprotein biosynthesis (diacylglyceryl transfer).</text>
</comment>
<comment type="subcellular location">
    <subcellularLocation>
        <location evidence="1">Cell inner membrane</location>
        <topology evidence="1">Multi-pass membrane protein</topology>
    </subcellularLocation>
</comment>
<comment type="similarity">
    <text evidence="1">Belongs to the Lgt family.</text>
</comment>
<proteinExistence type="inferred from homology"/>
<protein>
    <recommendedName>
        <fullName evidence="1">Phosphatidylglycerol--prolipoprotein diacylglyceryl transferase</fullName>
        <ecNumber evidence="1">2.5.1.145</ecNumber>
    </recommendedName>
</protein>